<comment type="function">
    <text>Core component of nucleosome. Nucleosomes wrap and compact DNA into chromatin, limiting DNA accessibility to the cellular machineries which require DNA as a template. Histones thereby play a central role in transcription regulation, DNA repair, DNA replication and chromosomal stability. DNA accessibility is regulated via a complex set of post-translational modifications of histones, also called histone code, and nucleosome remodeling.</text>
</comment>
<comment type="subunit">
    <text>The nucleosome is a histone octamer containing two molecules each of H2A, H2B, H3 and H4 assembled in one H3-H4 heterotetramer and two H2A-H2B heterodimers. The octamer wraps approximately 147 bp of DNA.</text>
</comment>
<comment type="subcellular location">
    <subcellularLocation>
        <location evidence="1">Nucleus</location>
    </subcellularLocation>
    <subcellularLocation>
        <location evidence="1">Chromosome</location>
    </subcellularLocation>
</comment>
<comment type="similarity">
    <text evidence="4">Belongs to the histone H4 family.</text>
</comment>
<dbReference type="EMBL" id="AY267753">
    <property type="protein sequence ID" value="AAP94672.1"/>
    <property type="molecule type" value="Genomic_DNA"/>
</dbReference>
<dbReference type="RefSeq" id="XP_063399840.1">
    <property type="nucleotide sequence ID" value="XM_063543770.1"/>
</dbReference>
<dbReference type="RefSeq" id="XP_063399849.1">
    <property type="nucleotide sequence ID" value="XM_063543779.1"/>
</dbReference>
<dbReference type="RefSeq" id="XP_063399860.1">
    <property type="nucleotide sequence ID" value="XM_063543790.1"/>
</dbReference>
<dbReference type="RefSeq" id="XP_063399873.1">
    <property type="nucleotide sequence ID" value="XM_063543803.1"/>
</dbReference>
<dbReference type="RefSeq" id="XP_063399875.1">
    <property type="nucleotide sequence ID" value="XM_063543805.1"/>
</dbReference>
<dbReference type="RefSeq" id="XP_063399879.1">
    <property type="nucleotide sequence ID" value="XM_063543809.1"/>
</dbReference>
<dbReference type="RefSeq" id="XP_063399883.1">
    <property type="nucleotide sequence ID" value="XM_063543813.1"/>
</dbReference>
<dbReference type="RefSeq" id="XP_063399888.1">
    <property type="nucleotide sequence ID" value="XM_063543818.1"/>
</dbReference>
<dbReference type="RefSeq" id="XP_063399889.1">
    <property type="nucleotide sequence ID" value="XM_063543819.1"/>
</dbReference>
<dbReference type="RefSeq" id="XP_063399891.1">
    <property type="nucleotide sequence ID" value="XM_063543821.1"/>
</dbReference>
<dbReference type="RefSeq" id="XP_063399893.1">
    <property type="nucleotide sequence ID" value="XM_063543823.1"/>
</dbReference>
<dbReference type="RefSeq" id="XP_063401235.1">
    <property type="nucleotide sequence ID" value="XM_063545165.1"/>
</dbReference>
<dbReference type="RefSeq" id="XP_063401246.1">
    <property type="nucleotide sequence ID" value="XM_063545176.1"/>
</dbReference>
<dbReference type="RefSeq" id="XP_063401247.1">
    <property type="nucleotide sequence ID" value="XM_063545177.1"/>
</dbReference>
<dbReference type="RefSeq" id="XP_063401250.1">
    <property type="nucleotide sequence ID" value="XM_063545180.1"/>
</dbReference>
<dbReference type="RefSeq" id="XP_063401264.1">
    <property type="nucleotide sequence ID" value="XM_063545194.1"/>
</dbReference>
<dbReference type="RefSeq" id="XP_063401265.1">
    <property type="nucleotide sequence ID" value="XM_063545195.1"/>
</dbReference>
<dbReference type="RefSeq" id="XP_063401281.1">
    <property type="nucleotide sequence ID" value="XM_063545211.1"/>
</dbReference>
<dbReference type="RefSeq" id="XP_063401282.1">
    <property type="nucleotide sequence ID" value="XM_063545212.1"/>
</dbReference>
<dbReference type="RefSeq" id="XP_063401296.1">
    <property type="nucleotide sequence ID" value="XM_063545226.1"/>
</dbReference>
<dbReference type="RefSeq" id="XP_063401298.1">
    <property type="nucleotide sequence ID" value="XM_063545228.1"/>
</dbReference>
<dbReference type="RefSeq" id="XP_063401309.1">
    <property type="nucleotide sequence ID" value="XM_063545239.1"/>
</dbReference>
<dbReference type="RefSeq" id="XP_063401310.1">
    <property type="nucleotide sequence ID" value="XM_063545240.1"/>
</dbReference>
<dbReference type="RefSeq" id="XP_063401320.1">
    <property type="nucleotide sequence ID" value="XM_063545250.1"/>
</dbReference>
<dbReference type="RefSeq" id="XP_063401321.1">
    <property type="nucleotide sequence ID" value="XM_063545251.1"/>
</dbReference>
<dbReference type="RefSeq" id="XP_063401322.1">
    <property type="nucleotide sequence ID" value="XM_063545252.1"/>
</dbReference>
<dbReference type="RefSeq" id="XP_063438913.1">
    <property type="nucleotide sequence ID" value="XM_063582843.1"/>
</dbReference>
<dbReference type="RefSeq" id="XP_063438915.1">
    <property type="nucleotide sequence ID" value="XM_063582845.1"/>
</dbReference>
<dbReference type="RefSeq" id="XP_063438916.1">
    <property type="nucleotide sequence ID" value="XM_063582846.1"/>
</dbReference>
<dbReference type="RefSeq" id="XP_063438917.1">
    <property type="nucleotide sequence ID" value="XM_063582847.1"/>
</dbReference>
<dbReference type="RefSeq" id="XP_063438918.1">
    <property type="nucleotide sequence ID" value="XM_063582848.1"/>
</dbReference>
<dbReference type="RefSeq" id="XP_063438919.1">
    <property type="nucleotide sequence ID" value="XM_063582849.1"/>
</dbReference>
<dbReference type="RefSeq" id="XP_063438920.1">
    <property type="nucleotide sequence ID" value="XM_063582850.1"/>
</dbReference>
<dbReference type="RefSeq" id="XP_063438921.1">
    <property type="nucleotide sequence ID" value="XM_063582851.1"/>
</dbReference>
<dbReference type="RefSeq" id="XP_063438923.1">
    <property type="nucleotide sequence ID" value="XM_063582853.1"/>
</dbReference>
<dbReference type="RefSeq" id="XP_063438924.1">
    <property type="nucleotide sequence ID" value="XM_063582854.1"/>
</dbReference>
<dbReference type="RefSeq" id="XP_063438925.1">
    <property type="nucleotide sequence ID" value="XM_063582855.1"/>
</dbReference>
<dbReference type="RefSeq" id="XP_063440034.1">
    <property type="nucleotide sequence ID" value="XM_063583964.1"/>
</dbReference>
<dbReference type="RefSeq" id="XP_063440035.1">
    <property type="nucleotide sequence ID" value="XM_063583965.1"/>
</dbReference>
<dbReference type="RefSeq" id="XP_063440051.1">
    <property type="nucleotide sequence ID" value="XM_063583981.1"/>
</dbReference>
<dbReference type="RefSeq" id="XP_063442235.1">
    <property type="nucleotide sequence ID" value="XM_063586165.1"/>
</dbReference>
<dbReference type="RefSeq" id="XP_063442238.1">
    <property type="nucleotide sequence ID" value="XM_063586168.1"/>
</dbReference>
<dbReference type="RefSeq" id="XP_063442241.1">
    <property type="nucleotide sequence ID" value="XM_063586171.1"/>
</dbReference>
<dbReference type="RefSeq" id="XP_063442245.1">
    <property type="nucleotide sequence ID" value="XM_063586175.1"/>
</dbReference>
<dbReference type="RefSeq" id="XP_063442251.1">
    <property type="nucleotide sequence ID" value="XM_063586181.1"/>
</dbReference>
<dbReference type="RefSeq" id="XP_063442254.1">
    <property type="nucleotide sequence ID" value="XM_063586184.1"/>
</dbReference>
<dbReference type="RefSeq" id="XP_063442256.1">
    <property type="nucleotide sequence ID" value="XM_063586186.1"/>
</dbReference>
<dbReference type="RefSeq" id="XP_063442259.1">
    <property type="nucleotide sequence ID" value="XM_063586189.1"/>
</dbReference>
<dbReference type="RefSeq" id="XP_063442263.1">
    <property type="nucleotide sequence ID" value="XM_063586193.1"/>
</dbReference>
<dbReference type="RefSeq" id="XP_063442266.1">
    <property type="nucleotide sequence ID" value="XM_063586196.1"/>
</dbReference>
<dbReference type="RefSeq" id="XP_063442269.1">
    <property type="nucleotide sequence ID" value="XM_063586199.1"/>
</dbReference>
<dbReference type="RefSeq" id="XP_063442271.1">
    <property type="nucleotide sequence ID" value="XM_063586201.1"/>
</dbReference>
<dbReference type="RefSeq" id="XP_063442273.1">
    <property type="nucleotide sequence ID" value="XM_063586203.1"/>
</dbReference>
<dbReference type="RefSeq" id="XP_063442276.1">
    <property type="nucleotide sequence ID" value="XM_063586206.1"/>
</dbReference>
<dbReference type="RefSeq" id="XP_063442278.1">
    <property type="nucleotide sequence ID" value="XM_063586208.1"/>
</dbReference>
<dbReference type="RefSeq" id="XP_063442281.1">
    <property type="nucleotide sequence ID" value="XM_063586211.1"/>
</dbReference>
<dbReference type="RefSeq" id="XP_063442283.1">
    <property type="nucleotide sequence ID" value="XM_063586213.1"/>
</dbReference>
<dbReference type="RefSeq" id="XP_063442288.1">
    <property type="nucleotide sequence ID" value="XM_063586218.1"/>
</dbReference>
<dbReference type="RefSeq" id="XP_063442291.1">
    <property type="nucleotide sequence ID" value="XM_063586221.1"/>
</dbReference>
<dbReference type="RefSeq" id="XP_063442293.1">
    <property type="nucleotide sequence ID" value="XM_063586223.1"/>
</dbReference>
<dbReference type="RefSeq" id="XP_063442296.1">
    <property type="nucleotide sequence ID" value="XM_063586226.1"/>
</dbReference>
<dbReference type="RefSeq" id="XP_063442299.1">
    <property type="nucleotide sequence ID" value="XM_063586229.1"/>
</dbReference>
<dbReference type="RefSeq" id="XP_063442303.1">
    <property type="nucleotide sequence ID" value="XM_063586233.1"/>
</dbReference>
<dbReference type="RefSeq" id="XP_063442305.1">
    <property type="nucleotide sequence ID" value="XM_063586235.1"/>
</dbReference>
<dbReference type="RefSeq" id="XP_063442310.1">
    <property type="nucleotide sequence ID" value="XM_063586240.1"/>
</dbReference>
<dbReference type="RefSeq" id="XP_063442314.1">
    <property type="nucleotide sequence ID" value="XM_063586244.1"/>
</dbReference>
<dbReference type="RefSeq" id="XP_063442319.1">
    <property type="nucleotide sequence ID" value="XM_063586249.1"/>
</dbReference>
<dbReference type="RefSeq" id="XP_063442324.1">
    <property type="nucleotide sequence ID" value="XM_063586254.1"/>
</dbReference>
<dbReference type="RefSeq" id="XP_063442325.1">
    <property type="nucleotide sequence ID" value="XM_063586255.1"/>
</dbReference>
<dbReference type="RefSeq" id="XP_063442329.1">
    <property type="nucleotide sequence ID" value="XM_063586259.1"/>
</dbReference>
<dbReference type="RefSeq" id="XP_063442332.1">
    <property type="nucleotide sequence ID" value="XM_063586262.1"/>
</dbReference>
<dbReference type="RefSeq" id="XP_063442335.1">
    <property type="nucleotide sequence ID" value="XM_063586265.1"/>
</dbReference>
<dbReference type="RefSeq" id="XP_063442341.1">
    <property type="nucleotide sequence ID" value="XM_063586271.1"/>
</dbReference>
<dbReference type="RefSeq" id="XP_063442345.1">
    <property type="nucleotide sequence ID" value="XM_063586275.1"/>
</dbReference>
<dbReference type="RefSeq" id="XP_063442350.1">
    <property type="nucleotide sequence ID" value="XM_063586280.1"/>
</dbReference>
<dbReference type="RefSeq" id="XP_063442356.1">
    <property type="nucleotide sequence ID" value="XM_063586286.1"/>
</dbReference>
<dbReference type="RefSeq" id="XP_063442361.1">
    <property type="nucleotide sequence ID" value="XM_063586291.1"/>
</dbReference>
<dbReference type="SMR" id="Q6WV72"/>
<dbReference type="GeneID" id="134684484"/>
<dbReference type="GeneID" id="134684492"/>
<dbReference type="GeneID" id="134684502"/>
<dbReference type="GeneID" id="134684513"/>
<dbReference type="GeneID" id="134684515"/>
<dbReference type="GeneID" id="134684520"/>
<dbReference type="GeneID" id="134684525"/>
<dbReference type="GeneID" id="134684529"/>
<dbReference type="GeneID" id="134684530"/>
<dbReference type="GeneID" id="134684532"/>
<dbReference type="GeneID" id="134684534"/>
<dbReference type="GeneID" id="134685411"/>
<dbReference type="GeneID" id="134685422"/>
<dbReference type="GeneID" id="134685423"/>
<dbReference type="GeneID" id="134685426"/>
<dbReference type="GeneID" id="134685440"/>
<dbReference type="GeneID" id="134685441"/>
<dbReference type="GeneID" id="134685454"/>
<dbReference type="GeneID" id="134685455"/>
<dbReference type="GeneID" id="134685469"/>
<dbReference type="GeneID" id="134685470"/>
<dbReference type="GeneID" id="134685481"/>
<dbReference type="GeneID" id="134685482"/>
<dbReference type="GeneID" id="134685492"/>
<dbReference type="GeneID" id="134685493"/>
<dbReference type="GeneID" id="134685494"/>
<dbReference type="GeneID" id="134720532"/>
<dbReference type="GeneID" id="134720533"/>
<dbReference type="GeneID" id="134720534"/>
<dbReference type="GeneID" id="134720535"/>
<dbReference type="GeneID" id="134720536"/>
<dbReference type="GeneID" id="134720538"/>
<dbReference type="GeneID" id="134720539"/>
<dbReference type="GeneID" id="134720540"/>
<dbReference type="GeneID" id="134720541"/>
<dbReference type="GeneID" id="134720542"/>
<dbReference type="GeneID" id="134720543"/>
<dbReference type="GeneID" id="134721161"/>
<dbReference type="GeneID" id="134721163"/>
<dbReference type="GeneID" id="134721176"/>
<dbReference type="GeneID" id="134722544"/>
<dbReference type="GeneID" id="134722547"/>
<dbReference type="GeneID" id="134722550"/>
<dbReference type="GeneID" id="134722553"/>
<dbReference type="GeneID" id="134722558"/>
<dbReference type="GeneID" id="134722561"/>
<dbReference type="GeneID" id="134722563"/>
<dbReference type="GeneID" id="134722567"/>
<dbReference type="GeneID" id="134722571"/>
<dbReference type="GeneID" id="134722575"/>
<dbReference type="GeneID" id="134722578"/>
<dbReference type="GeneID" id="134722581"/>
<dbReference type="GeneID" id="134722583"/>
<dbReference type="GeneID" id="134722585"/>
<dbReference type="GeneID" id="134722587"/>
<dbReference type="GeneID" id="134722591"/>
<dbReference type="GeneID" id="134722593"/>
<dbReference type="GeneID" id="134722602"/>
<dbReference type="GeneID" id="134722604"/>
<dbReference type="GeneID" id="134722606"/>
<dbReference type="GeneID" id="134722609"/>
<dbReference type="GeneID" id="134722613"/>
<dbReference type="GeneID" id="134722617"/>
<dbReference type="GeneID" id="134722619"/>
<dbReference type="GeneID" id="134722623"/>
<dbReference type="GeneID" id="134722628"/>
<dbReference type="GeneID" id="134722632"/>
<dbReference type="GeneID" id="134722636"/>
<dbReference type="GeneID" id="134722637"/>
<dbReference type="GeneID" id="134722640"/>
<dbReference type="GeneID" id="134722643"/>
<dbReference type="GeneID" id="134722647"/>
<dbReference type="GeneID" id="134722652"/>
<dbReference type="GeneID" id="134722657"/>
<dbReference type="GeneID" id="134722661"/>
<dbReference type="GeneID" id="134722668"/>
<dbReference type="GeneID" id="134722672"/>
<dbReference type="GO" id="GO:0000786">
    <property type="term" value="C:nucleosome"/>
    <property type="evidence" value="ECO:0007669"/>
    <property type="project" value="UniProtKB-KW"/>
</dbReference>
<dbReference type="GO" id="GO:0005634">
    <property type="term" value="C:nucleus"/>
    <property type="evidence" value="ECO:0007669"/>
    <property type="project" value="UniProtKB-SubCell"/>
</dbReference>
<dbReference type="GO" id="GO:0003677">
    <property type="term" value="F:DNA binding"/>
    <property type="evidence" value="ECO:0007669"/>
    <property type="project" value="UniProtKB-KW"/>
</dbReference>
<dbReference type="GO" id="GO:0046982">
    <property type="term" value="F:protein heterodimerization activity"/>
    <property type="evidence" value="ECO:0007669"/>
    <property type="project" value="InterPro"/>
</dbReference>
<dbReference type="GO" id="GO:0030527">
    <property type="term" value="F:structural constituent of chromatin"/>
    <property type="evidence" value="ECO:0007669"/>
    <property type="project" value="InterPro"/>
</dbReference>
<dbReference type="CDD" id="cd22912">
    <property type="entry name" value="HFD_H4"/>
    <property type="match status" value="1"/>
</dbReference>
<dbReference type="FunFam" id="1.10.20.10:FF:000002">
    <property type="entry name" value="Histone H4"/>
    <property type="match status" value="1"/>
</dbReference>
<dbReference type="Gene3D" id="1.10.20.10">
    <property type="entry name" value="Histone, subunit A"/>
    <property type="match status" value="1"/>
</dbReference>
<dbReference type="InterPro" id="IPR035425">
    <property type="entry name" value="CENP-T/H4_C"/>
</dbReference>
<dbReference type="InterPro" id="IPR009072">
    <property type="entry name" value="Histone-fold"/>
</dbReference>
<dbReference type="InterPro" id="IPR001951">
    <property type="entry name" value="Histone_H4"/>
</dbReference>
<dbReference type="InterPro" id="IPR019809">
    <property type="entry name" value="Histone_H4_CS"/>
</dbReference>
<dbReference type="InterPro" id="IPR004823">
    <property type="entry name" value="TAF_TATA-bd_Histone-like_dom"/>
</dbReference>
<dbReference type="PANTHER" id="PTHR10484">
    <property type="entry name" value="HISTONE H4"/>
    <property type="match status" value="1"/>
</dbReference>
<dbReference type="Pfam" id="PF15511">
    <property type="entry name" value="CENP-T_C"/>
    <property type="match status" value="1"/>
</dbReference>
<dbReference type="PRINTS" id="PR00623">
    <property type="entry name" value="HISTONEH4"/>
</dbReference>
<dbReference type="SMART" id="SM00417">
    <property type="entry name" value="H4"/>
    <property type="match status" value="1"/>
</dbReference>
<dbReference type="SMART" id="SM00803">
    <property type="entry name" value="TAF"/>
    <property type="match status" value="1"/>
</dbReference>
<dbReference type="SUPFAM" id="SSF47113">
    <property type="entry name" value="Histone-fold"/>
    <property type="match status" value="1"/>
</dbReference>
<dbReference type="PROSITE" id="PS00047">
    <property type="entry name" value="HISTONE_H4"/>
    <property type="match status" value="1"/>
</dbReference>
<sequence>MSGRGKGGKGLGKGGAKRHRKVLRDNIQGITKPAIRRLARRGGVKRISGLIYEETRGVLKVFLENVIRDAVTYTEHAKRKTVTAMDVVYALKRQGRTLYGFGG</sequence>
<feature type="initiator methionine" description="Removed" evidence="1">
    <location>
        <position position="1"/>
    </location>
</feature>
<feature type="chain" id="PRO_0000158335" description="Histone H4">
    <location>
        <begin position="2"/>
        <end position="103"/>
    </location>
</feature>
<feature type="DNA-binding region">
    <location>
        <begin position="17"/>
        <end position="21"/>
    </location>
</feature>
<feature type="region of interest" description="Disordered" evidence="3">
    <location>
        <begin position="1"/>
        <end position="20"/>
    </location>
</feature>
<feature type="compositionally biased region" description="Gly residues" evidence="3">
    <location>
        <begin position="1"/>
        <end position="14"/>
    </location>
</feature>
<feature type="modified residue" description="N-acetylserine" evidence="1">
    <location>
        <position position="2"/>
    </location>
</feature>
<feature type="modified residue" description="N6-acetyl-N6-methyllysine; alternate" evidence="2">
    <location>
        <position position="6"/>
    </location>
</feature>
<feature type="modified residue" description="N6-acetyl-N6-methyllysine; alternate" evidence="2">
    <location>
        <position position="13"/>
    </location>
</feature>
<feature type="modified residue" description="N6-acetyllysine" evidence="1">
    <location>
        <position position="17"/>
    </location>
</feature>
<feature type="modified residue" description="N6-methyllysine" evidence="1">
    <location>
        <position position="21"/>
    </location>
</feature>
<reference key="1">
    <citation type="journal article" date="2004" name="J. Mol. Evol.">
        <title>Molecular evolutionary characterization of the mussel Mytilus histone multigene family: first record of a tandemly repeated unit of five histone genes containing an H1 subtype with 'orphon' features.</title>
        <authorList>
            <person name="Eirin-Lopez J.M."/>
            <person name="Ruiz F."/>
            <person name="Gonzalez-Tizon A.M."/>
            <person name="Martinez A."/>
            <person name="Sanchez L."/>
            <person name="Mendez J."/>
        </authorList>
    </citation>
    <scope>NUCLEOTIDE SEQUENCE [GENOMIC DNA]</scope>
</reference>
<name>H4_MYTTR</name>
<accession>Q6WV72</accession>
<protein>
    <recommendedName>
        <fullName>Histone H4</fullName>
    </recommendedName>
</protein>
<keyword id="KW-0007">Acetylation</keyword>
<keyword id="KW-0158">Chromosome</keyword>
<keyword id="KW-0238">DNA-binding</keyword>
<keyword id="KW-0488">Methylation</keyword>
<keyword id="KW-0544">Nucleosome core</keyword>
<keyword id="KW-0539">Nucleus</keyword>
<evidence type="ECO:0000250" key="1"/>
<evidence type="ECO:0000250" key="2">
    <source>
        <dbReference type="UniProtKB" id="P62805"/>
    </source>
</evidence>
<evidence type="ECO:0000256" key="3">
    <source>
        <dbReference type="SAM" id="MobiDB-lite"/>
    </source>
</evidence>
<evidence type="ECO:0000305" key="4"/>
<proteinExistence type="inferred from homology"/>
<organism>
    <name type="scientific">Mytilus trossulus</name>
    <name type="common">Blue mussel</name>
    <dbReference type="NCBI Taxonomy" id="6551"/>
    <lineage>
        <taxon>Eukaryota</taxon>
        <taxon>Metazoa</taxon>
        <taxon>Spiralia</taxon>
        <taxon>Lophotrochozoa</taxon>
        <taxon>Mollusca</taxon>
        <taxon>Bivalvia</taxon>
        <taxon>Autobranchia</taxon>
        <taxon>Pteriomorphia</taxon>
        <taxon>Mytilida</taxon>
        <taxon>Mytiloidea</taxon>
        <taxon>Mytilidae</taxon>
        <taxon>Mytilinae</taxon>
        <taxon>Mytilus</taxon>
    </lineage>
</organism>